<proteinExistence type="inferred from homology"/>
<sequence length="134" mass="14467">MRSVLTISASLLFGLALSSVAHANDHKILGVIAMPRNETNDLTLKIPVCRIVKRIQLTADHGDIELSGASVYFKTARSASQSLNVPSSIKEGQTTGWININSDNDNKRCVSKITFSGHTVNSSDMARLKVIGDD</sequence>
<protein>
    <recommendedName>
        <fullName evidence="1">UPF0412 protein YaaI</fullName>
    </recommendedName>
</protein>
<feature type="signal peptide" evidence="1">
    <location>
        <begin position="1"/>
        <end position="23"/>
    </location>
</feature>
<feature type="chain" id="PRO_0000278586" description="UPF0412 protein YaaI">
    <location>
        <begin position="24"/>
        <end position="134"/>
    </location>
</feature>
<gene>
    <name evidence="1" type="primary">yaaI</name>
    <name type="ordered locus">SCH_0011</name>
</gene>
<evidence type="ECO:0000255" key="1">
    <source>
        <dbReference type="HAMAP-Rule" id="MF_01372"/>
    </source>
</evidence>
<organism>
    <name type="scientific">Salmonella choleraesuis (strain SC-B67)</name>
    <dbReference type="NCBI Taxonomy" id="321314"/>
    <lineage>
        <taxon>Bacteria</taxon>
        <taxon>Pseudomonadati</taxon>
        <taxon>Pseudomonadota</taxon>
        <taxon>Gammaproteobacteria</taxon>
        <taxon>Enterobacterales</taxon>
        <taxon>Enterobacteriaceae</taxon>
        <taxon>Salmonella</taxon>
    </lineage>
</organism>
<comment type="similarity">
    <text evidence="1">Belongs to the UPF0412 family.</text>
</comment>
<keyword id="KW-0732">Signal</keyword>
<accession>Q57TP4</accession>
<name>YAAI_SALCH</name>
<reference key="1">
    <citation type="journal article" date="2005" name="Nucleic Acids Res.">
        <title>The genome sequence of Salmonella enterica serovar Choleraesuis, a highly invasive and resistant zoonotic pathogen.</title>
        <authorList>
            <person name="Chiu C.-H."/>
            <person name="Tang P."/>
            <person name="Chu C."/>
            <person name="Hu S."/>
            <person name="Bao Q."/>
            <person name="Yu J."/>
            <person name="Chou Y.-Y."/>
            <person name="Wang H.-S."/>
            <person name="Lee Y.-S."/>
        </authorList>
    </citation>
    <scope>NUCLEOTIDE SEQUENCE [LARGE SCALE GENOMIC DNA]</scope>
    <source>
        <strain>SC-B67</strain>
    </source>
</reference>
<dbReference type="EMBL" id="AE017220">
    <property type="protein sequence ID" value="AAX63917.1"/>
    <property type="molecule type" value="Genomic_DNA"/>
</dbReference>
<dbReference type="RefSeq" id="WP_001258090.1">
    <property type="nucleotide sequence ID" value="NC_006905.1"/>
</dbReference>
<dbReference type="KEGG" id="sec:SCH_0011"/>
<dbReference type="HOGENOM" id="CLU_158661_0_0_6"/>
<dbReference type="Proteomes" id="UP000000538">
    <property type="component" value="Chromosome"/>
</dbReference>
<dbReference type="HAMAP" id="MF_01372">
    <property type="entry name" value="UPF0412"/>
    <property type="match status" value="1"/>
</dbReference>
<dbReference type="InterPro" id="IPR020240">
    <property type="entry name" value="UPF0412_YaaI"/>
</dbReference>
<dbReference type="NCBIfam" id="NF007541">
    <property type="entry name" value="PRK10154.1"/>
    <property type="match status" value="1"/>
</dbReference>
<dbReference type="Pfam" id="PF10807">
    <property type="entry name" value="DUF2541"/>
    <property type="match status" value="1"/>
</dbReference>